<sequence length="183" mass="19576">MQTKKNEIWVGIFLLAALLAALFVCLKAANVTSIRTEPTYTLYATFDNIGGLKARSPVSIGGVVVGRVADITLDPKTYLPRVTLEIEQRYNHIPDTSSLSIRTSGLLGEQYLALNVGFEDPELGTAILKDGDTIQDTKSAMVLEDLIGQFLYGSKGDDNKNSGDAPAAAPGNNETTEPVGTTK</sequence>
<reference key="1">
    <citation type="journal article" date="2001" name="Nature">
        <title>Genome sequence of enterohaemorrhagic Escherichia coli O157:H7.</title>
        <authorList>
            <person name="Perna N.T."/>
            <person name="Plunkett G. III"/>
            <person name="Burland V."/>
            <person name="Mau B."/>
            <person name="Glasner J.D."/>
            <person name="Rose D.J."/>
            <person name="Mayhew G.F."/>
            <person name="Evans P.S."/>
            <person name="Gregor J."/>
            <person name="Kirkpatrick H.A."/>
            <person name="Posfai G."/>
            <person name="Hackett J."/>
            <person name="Klink S."/>
            <person name="Boutin A."/>
            <person name="Shao Y."/>
            <person name="Miller L."/>
            <person name="Grotbeck E.J."/>
            <person name="Davis N.W."/>
            <person name="Lim A."/>
            <person name="Dimalanta E.T."/>
            <person name="Potamousis K."/>
            <person name="Apodaca J."/>
            <person name="Anantharaman T.S."/>
            <person name="Lin J."/>
            <person name="Yen G."/>
            <person name="Schwartz D.C."/>
            <person name="Welch R.A."/>
            <person name="Blattner F.R."/>
        </authorList>
    </citation>
    <scope>NUCLEOTIDE SEQUENCE [LARGE SCALE GENOMIC DNA]</scope>
    <source>
        <strain>O157:H7 / EDL933 / ATCC 700927 / EHEC</strain>
    </source>
</reference>
<reference key="2">
    <citation type="journal article" date="2001" name="DNA Res.">
        <title>Complete genome sequence of enterohemorrhagic Escherichia coli O157:H7 and genomic comparison with a laboratory strain K-12.</title>
        <authorList>
            <person name="Hayashi T."/>
            <person name="Makino K."/>
            <person name="Ohnishi M."/>
            <person name="Kurokawa K."/>
            <person name="Ishii K."/>
            <person name="Yokoyama K."/>
            <person name="Han C.-G."/>
            <person name="Ohtsubo E."/>
            <person name="Nakayama K."/>
            <person name="Murata T."/>
            <person name="Tanaka M."/>
            <person name="Tobe T."/>
            <person name="Iida T."/>
            <person name="Takami H."/>
            <person name="Honda T."/>
            <person name="Sasakawa C."/>
            <person name="Ogasawara N."/>
            <person name="Yasunaga T."/>
            <person name="Kuhara S."/>
            <person name="Shiba T."/>
            <person name="Hattori M."/>
            <person name="Shinagawa H."/>
        </authorList>
    </citation>
    <scope>NUCLEOTIDE SEQUENCE [LARGE SCALE GENOMIC DNA]</scope>
    <source>
        <strain>O157:H7 / Sakai / RIMD 0509952 / EHEC</strain>
    </source>
</reference>
<feature type="chain" id="PRO_0000013919" description="Intermembrane phospholipid transport system binding protein MlaD">
    <location>
        <begin position="1"/>
        <end position="183"/>
    </location>
</feature>
<feature type="topological domain" description="Cytoplasmic" evidence="1">
    <location>
        <begin position="1"/>
        <end position="7"/>
    </location>
</feature>
<feature type="transmembrane region" description="Helical; Signal-anchor for type II membrane protein" evidence="2">
    <location>
        <begin position="8"/>
        <end position="28"/>
    </location>
</feature>
<feature type="topological domain" description="Periplasmic" evidence="1">
    <location>
        <begin position="29"/>
        <end position="183"/>
    </location>
</feature>
<feature type="region of interest" description="MCE/MlaD" evidence="4">
    <location>
        <begin position="39"/>
        <end position="116"/>
    </location>
</feature>
<feature type="region of interest" description="Disordered" evidence="3">
    <location>
        <begin position="155"/>
        <end position="183"/>
    </location>
</feature>
<feature type="compositionally biased region" description="Polar residues" evidence="3">
    <location>
        <begin position="172"/>
        <end position="183"/>
    </location>
</feature>
<organism>
    <name type="scientific">Escherichia coli O157:H7</name>
    <dbReference type="NCBI Taxonomy" id="83334"/>
    <lineage>
        <taxon>Bacteria</taxon>
        <taxon>Pseudomonadati</taxon>
        <taxon>Pseudomonadota</taxon>
        <taxon>Gammaproteobacteria</taxon>
        <taxon>Enterobacterales</taxon>
        <taxon>Enterobacteriaceae</taxon>
        <taxon>Escherichia</taxon>
    </lineage>
</organism>
<protein>
    <recommendedName>
        <fullName evidence="1">Intermembrane phospholipid transport system binding protein MlaD</fullName>
    </recommendedName>
</protein>
<proteinExistence type="inferred from homology"/>
<accession>P64605</accession>
<accession>P45391</accession>
<keyword id="KW-0997">Cell inner membrane</keyword>
<keyword id="KW-1003">Cell membrane</keyword>
<keyword id="KW-0472">Membrane</keyword>
<keyword id="KW-1185">Reference proteome</keyword>
<keyword id="KW-0735">Signal-anchor</keyword>
<keyword id="KW-0812">Transmembrane</keyword>
<keyword id="KW-1133">Transmembrane helix</keyword>
<keyword id="KW-0813">Transport</keyword>
<name>MLAD_ECO57</name>
<evidence type="ECO:0000250" key="1">
    <source>
        <dbReference type="UniProtKB" id="P64604"/>
    </source>
</evidence>
<evidence type="ECO:0000255" key="2"/>
<evidence type="ECO:0000256" key="3">
    <source>
        <dbReference type="SAM" id="MobiDB-lite"/>
    </source>
</evidence>
<evidence type="ECO:0000305" key="4"/>
<dbReference type="EMBL" id="AE005174">
    <property type="protein sequence ID" value="AAG58327.1"/>
    <property type="molecule type" value="Genomic_DNA"/>
</dbReference>
<dbReference type="EMBL" id="BA000007">
    <property type="protein sequence ID" value="BAB37495.1"/>
    <property type="molecule type" value="Genomic_DNA"/>
</dbReference>
<dbReference type="PIR" id="C85983">
    <property type="entry name" value="C85983"/>
</dbReference>
<dbReference type="PIR" id="H91137">
    <property type="entry name" value="H91137"/>
</dbReference>
<dbReference type="RefSeq" id="NP_312099.1">
    <property type="nucleotide sequence ID" value="NC_002695.1"/>
</dbReference>
<dbReference type="RefSeq" id="WP_001296448.1">
    <property type="nucleotide sequence ID" value="NZ_VOAI01000014.1"/>
</dbReference>
<dbReference type="SMR" id="P64605"/>
<dbReference type="STRING" id="155864.Z4556"/>
<dbReference type="GeneID" id="916081"/>
<dbReference type="GeneID" id="93778788"/>
<dbReference type="KEGG" id="ece:Z4556"/>
<dbReference type="KEGG" id="ecs:ECs_4072"/>
<dbReference type="PATRIC" id="fig|386585.9.peg.4251"/>
<dbReference type="eggNOG" id="COG1463">
    <property type="taxonomic scope" value="Bacteria"/>
</dbReference>
<dbReference type="HOGENOM" id="CLU_107027_0_0_6"/>
<dbReference type="OMA" id="QYQFPKD"/>
<dbReference type="Proteomes" id="UP000000558">
    <property type="component" value="Chromosome"/>
</dbReference>
<dbReference type="Proteomes" id="UP000002519">
    <property type="component" value="Chromosome"/>
</dbReference>
<dbReference type="GO" id="GO:0005886">
    <property type="term" value="C:plasma membrane"/>
    <property type="evidence" value="ECO:0007669"/>
    <property type="project" value="UniProtKB-SubCell"/>
</dbReference>
<dbReference type="GO" id="GO:0005543">
    <property type="term" value="F:phospholipid binding"/>
    <property type="evidence" value="ECO:0007669"/>
    <property type="project" value="TreeGrafter"/>
</dbReference>
<dbReference type="GO" id="GO:0005548">
    <property type="term" value="F:phospholipid transporter activity"/>
    <property type="evidence" value="ECO:0007669"/>
    <property type="project" value="TreeGrafter"/>
</dbReference>
<dbReference type="InterPro" id="IPR030970">
    <property type="entry name" value="ABC_MlaD"/>
</dbReference>
<dbReference type="InterPro" id="IPR003399">
    <property type="entry name" value="Mce/MlaD"/>
</dbReference>
<dbReference type="InterPro" id="IPR052336">
    <property type="entry name" value="MlaD_Phospholipid_Transporter"/>
</dbReference>
<dbReference type="NCBIfam" id="TIGR04430">
    <property type="entry name" value="OM_asym_MlaD"/>
    <property type="match status" value="1"/>
</dbReference>
<dbReference type="PANTHER" id="PTHR33371:SF4">
    <property type="entry name" value="INTERMEMBRANE PHOSPHOLIPID TRANSPORT SYSTEM BINDING PROTEIN MLAD"/>
    <property type="match status" value="1"/>
</dbReference>
<dbReference type="PANTHER" id="PTHR33371">
    <property type="entry name" value="INTERMEMBRANE PHOSPHOLIPID TRANSPORT SYSTEM BINDING PROTEIN MLAD-RELATED"/>
    <property type="match status" value="1"/>
</dbReference>
<dbReference type="Pfam" id="PF02470">
    <property type="entry name" value="MlaD"/>
    <property type="match status" value="1"/>
</dbReference>
<comment type="function">
    <text evidence="1">Part of the ABC transporter complex MlaFEDB, which is involved in a phospholipid transport pathway that maintains lipid asymmetry in the outer membrane by retrograde trafficking of phospholipids from the outer membrane to the inner membrane. MlaD functions in substrate binding with strong affinity for phospholipids and modulates ATP hydrolytic activity of the complex.</text>
</comment>
<comment type="subunit">
    <text evidence="1">The complex is composed of two ATP-binding proteins (MlaF), two transmembrane proteins (MlaE), two cytoplasmic solute-binding proteins (MlaB) and six periplasmic solute-binding proteins (MlaD).</text>
</comment>
<comment type="subcellular location">
    <subcellularLocation>
        <location evidence="1">Cell inner membrane</location>
        <topology evidence="1">Single-pass type II membrane protein</topology>
        <orientation evidence="1">Periplasmic side</orientation>
    </subcellularLocation>
</comment>
<comment type="similarity">
    <text evidence="4">Belongs to the MlaD family.</text>
</comment>
<gene>
    <name evidence="1" type="primary">mlaD</name>
    <name type="ordered locus">Z4556</name>
    <name type="ordered locus">ECs4072</name>
</gene>